<comment type="function">
    <text evidence="1">Acts as a transcriptional repressor. Plays roles in regulating gene expression and genome stability (By similarity).</text>
</comment>
<comment type="subcellular location">
    <subcellularLocation>
        <location evidence="3">Nucleus</location>
    </subcellularLocation>
</comment>
<comment type="alternative products">
    <event type="alternative splicing"/>
    <isoform>
        <id>Q9XIE1-1</id>
        <name>1</name>
        <sequence type="displayed"/>
    </isoform>
    <text>A number of isoforms are produced. According to EST sequences.</text>
</comment>
<comment type="sequence caution" evidence="5">
    <conflict type="erroneous gene model prediction">
        <sequence resource="EMBL-CDS" id="AAD39330"/>
    </conflict>
</comment>
<protein>
    <recommendedName>
        <fullName>Paired amphipathic helix protein Sin3-like 5</fullName>
    </recommendedName>
</protein>
<accession>Q9XIE1</accession>
<accession>F4IEM9</accession>
<gene>
    <name type="primary">SNL5</name>
    <name type="ordered locus">At1g59890</name>
    <name type="ORF">F23H11.20</name>
</gene>
<evidence type="ECO:0000250" key="1"/>
<evidence type="ECO:0000250" key="2">
    <source>
        <dbReference type="UniProtKB" id="Q9LFQ3"/>
    </source>
</evidence>
<evidence type="ECO:0000255" key="3">
    <source>
        <dbReference type="PROSITE-ProRule" id="PRU00810"/>
    </source>
</evidence>
<evidence type="ECO:0000256" key="4">
    <source>
        <dbReference type="SAM" id="MobiDB-lite"/>
    </source>
</evidence>
<evidence type="ECO:0000305" key="5"/>
<name>SNL5_ARATH</name>
<dbReference type="EMBL" id="AC007258">
    <property type="protein sequence ID" value="AAD39330.1"/>
    <property type="status" value="ALT_SEQ"/>
    <property type="molecule type" value="Genomic_DNA"/>
</dbReference>
<dbReference type="EMBL" id="CP002684">
    <property type="protein sequence ID" value="AEE33634.1"/>
    <property type="molecule type" value="Genomic_DNA"/>
</dbReference>
<dbReference type="PIR" id="A96623">
    <property type="entry name" value="A96623"/>
</dbReference>
<dbReference type="RefSeq" id="NP_176197.3">
    <molecule id="Q9XIE1-1"/>
    <property type="nucleotide sequence ID" value="NM_104681.6"/>
</dbReference>
<dbReference type="SMR" id="Q9XIE1"/>
<dbReference type="BioGRID" id="27508">
    <property type="interactions" value="1"/>
</dbReference>
<dbReference type="FunCoup" id="Q9XIE1">
    <property type="interactions" value="4056"/>
</dbReference>
<dbReference type="STRING" id="3702.Q9XIE1"/>
<dbReference type="iPTMnet" id="Q9XIE1"/>
<dbReference type="MetOSite" id="Q9XIE1"/>
<dbReference type="PaxDb" id="3702-AT1G59890.2"/>
<dbReference type="ProteomicsDB" id="228451">
    <molecule id="Q9XIE1-1"/>
</dbReference>
<dbReference type="EnsemblPlants" id="AT1G59890.1">
    <molecule id="Q9XIE1-1"/>
    <property type="protein sequence ID" value="AT1G59890.1"/>
    <property type="gene ID" value="AT1G59890"/>
</dbReference>
<dbReference type="GeneID" id="842283"/>
<dbReference type="Gramene" id="AT1G59890.1">
    <molecule id="Q9XIE1-1"/>
    <property type="protein sequence ID" value="AT1G59890.1"/>
    <property type="gene ID" value="AT1G59890"/>
</dbReference>
<dbReference type="KEGG" id="ath:AT1G59890"/>
<dbReference type="Araport" id="AT1G59890"/>
<dbReference type="TAIR" id="AT1G59890">
    <property type="gene designation" value="SNL5"/>
</dbReference>
<dbReference type="eggNOG" id="KOG4204">
    <property type="taxonomic scope" value="Eukaryota"/>
</dbReference>
<dbReference type="InParanoid" id="Q9XIE1"/>
<dbReference type="OMA" id="QWPPGED"/>
<dbReference type="PRO" id="PR:Q9XIE1"/>
<dbReference type="Proteomes" id="UP000006548">
    <property type="component" value="Chromosome 1"/>
</dbReference>
<dbReference type="ExpressionAtlas" id="Q9XIE1">
    <property type="expression patterns" value="baseline and differential"/>
</dbReference>
<dbReference type="GO" id="GO:0005634">
    <property type="term" value="C:nucleus"/>
    <property type="evidence" value="ECO:0007669"/>
    <property type="project" value="UniProtKB-SubCell"/>
</dbReference>
<dbReference type="GO" id="GO:0003714">
    <property type="term" value="F:transcription corepressor activity"/>
    <property type="evidence" value="ECO:0007669"/>
    <property type="project" value="InterPro"/>
</dbReference>
<dbReference type="FunFam" id="1.20.1160.11:FF:000001">
    <property type="entry name" value="Paired amphipathic helix protein Sin3"/>
    <property type="match status" value="1"/>
</dbReference>
<dbReference type="FunFam" id="1.20.1160.11:FF:000003">
    <property type="entry name" value="Paired amphipathic helix SIN3-like protein"/>
    <property type="match status" value="1"/>
</dbReference>
<dbReference type="Gene3D" id="1.20.1160.11">
    <property type="entry name" value="Paired amphipathic helix"/>
    <property type="match status" value="2"/>
</dbReference>
<dbReference type="InterPro" id="IPR013194">
    <property type="entry name" value="HDAC_interact_dom"/>
</dbReference>
<dbReference type="InterPro" id="IPR003822">
    <property type="entry name" value="PAH"/>
</dbReference>
<dbReference type="InterPro" id="IPR036600">
    <property type="entry name" value="PAH_sf"/>
</dbReference>
<dbReference type="InterPro" id="IPR039774">
    <property type="entry name" value="Sin3-like"/>
</dbReference>
<dbReference type="InterPro" id="IPR031693">
    <property type="entry name" value="Sin3_C"/>
</dbReference>
<dbReference type="PANTHER" id="PTHR12346:SF31">
    <property type="entry name" value="PAIRED AMPHIPATHIC HELIX PROTEIN SIN3-LIKE 5"/>
    <property type="match status" value="1"/>
</dbReference>
<dbReference type="PANTHER" id="PTHR12346">
    <property type="entry name" value="SIN3B-RELATED"/>
    <property type="match status" value="1"/>
</dbReference>
<dbReference type="Pfam" id="PF02671">
    <property type="entry name" value="PAH"/>
    <property type="match status" value="2"/>
</dbReference>
<dbReference type="Pfam" id="PF08295">
    <property type="entry name" value="Sin3_corepress"/>
    <property type="match status" value="1"/>
</dbReference>
<dbReference type="Pfam" id="PF16879">
    <property type="entry name" value="Sin3a_C"/>
    <property type="match status" value="1"/>
</dbReference>
<dbReference type="SMART" id="SM00761">
    <property type="entry name" value="HDAC_interact"/>
    <property type="match status" value="1"/>
</dbReference>
<dbReference type="SUPFAM" id="SSF47762">
    <property type="entry name" value="PAH2 domain"/>
    <property type="match status" value="2"/>
</dbReference>
<dbReference type="PROSITE" id="PS51477">
    <property type="entry name" value="PAH"/>
    <property type="match status" value="2"/>
</dbReference>
<organism>
    <name type="scientific">Arabidopsis thaliana</name>
    <name type="common">Mouse-ear cress</name>
    <dbReference type="NCBI Taxonomy" id="3702"/>
    <lineage>
        <taxon>Eukaryota</taxon>
        <taxon>Viridiplantae</taxon>
        <taxon>Streptophyta</taxon>
        <taxon>Embryophyta</taxon>
        <taxon>Tracheophyta</taxon>
        <taxon>Spermatophyta</taxon>
        <taxon>Magnoliopsida</taxon>
        <taxon>eudicotyledons</taxon>
        <taxon>Gunneridae</taxon>
        <taxon>Pentapetalae</taxon>
        <taxon>rosids</taxon>
        <taxon>malvids</taxon>
        <taxon>Brassicales</taxon>
        <taxon>Brassicaceae</taxon>
        <taxon>Camelineae</taxon>
        <taxon>Arabidopsis</taxon>
    </lineage>
</organism>
<proteinExistence type="inferred from homology"/>
<reference key="1">
    <citation type="journal article" date="2000" name="Nature">
        <title>Sequence and analysis of chromosome 1 of the plant Arabidopsis thaliana.</title>
        <authorList>
            <person name="Theologis A."/>
            <person name="Ecker J.R."/>
            <person name="Palm C.J."/>
            <person name="Federspiel N.A."/>
            <person name="Kaul S."/>
            <person name="White O."/>
            <person name="Alonso J."/>
            <person name="Altafi H."/>
            <person name="Araujo R."/>
            <person name="Bowman C.L."/>
            <person name="Brooks S.Y."/>
            <person name="Buehler E."/>
            <person name="Chan A."/>
            <person name="Chao Q."/>
            <person name="Chen H."/>
            <person name="Cheuk R.F."/>
            <person name="Chin C.W."/>
            <person name="Chung M.K."/>
            <person name="Conn L."/>
            <person name="Conway A.B."/>
            <person name="Conway A.R."/>
            <person name="Creasy T.H."/>
            <person name="Dewar K."/>
            <person name="Dunn P."/>
            <person name="Etgu P."/>
            <person name="Feldblyum T.V."/>
            <person name="Feng J.-D."/>
            <person name="Fong B."/>
            <person name="Fujii C.Y."/>
            <person name="Gill J.E."/>
            <person name="Goldsmith A.D."/>
            <person name="Haas B."/>
            <person name="Hansen N.F."/>
            <person name="Hughes B."/>
            <person name="Huizar L."/>
            <person name="Hunter J.L."/>
            <person name="Jenkins J."/>
            <person name="Johnson-Hopson C."/>
            <person name="Khan S."/>
            <person name="Khaykin E."/>
            <person name="Kim C.J."/>
            <person name="Koo H.L."/>
            <person name="Kremenetskaia I."/>
            <person name="Kurtz D.B."/>
            <person name="Kwan A."/>
            <person name="Lam B."/>
            <person name="Langin-Hooper S."/>
            <person name="Lee A."/>
            <person name="Lee J.M."/>
            <person name="Lenz C.A."/>
            <person name="Li J.H."/>
            <person name="Li Y.-P."/>
            <person name="Lin X."/>
            <person name="Liu S.X."/>
            <person name="Liu Z.A."/>
            <person name="Luros J.S."/>
            <person name="Maiti R."/>
            <person name="Marziali A."/>
            <person name="Militscher J."/>
            <person name="Miranda M."/>
            <person name="Nguyen M."/>
            <person name="Nierman W.C."/>
            <person name="Osborne B.I."/>
            <person name="Pai G."/>
            <person name="Peterson J."/>
            <person name="Pham P.K."/>
            <person name="Rizzo M."/>
            <person name="Rooney T."/>
            <person name="Rowley D."/>
            <person name="Sakano H."/>
            <person name="Salzberg S.L."/>
            <person name="Schwartz J.R."/>
            <person name="Shinn P."/>
            <person name="Southwick A.M."/>
            <person name="Sun H."/>
            <person name="Tallon L.J."/>
            <person name="Tambunga G."/>
            <person name="Toriumi M.J."/>
            <person name="Town C.D."/>
            <person name="Utterback T."/>
            <person name="Van Aken S."/>
            <person name="Vaysberg M."/>
            <person name="Vysotskaia V.S."/>
            <person name="Walker M."/>
            <person name="Wu D."/>
            <person name="Yu G."/>
            <person name="Fraser C.M."/>
            <person name="Venter J.C."/>
            <person name="Davis R.W."/>
        </authorList>
    </citation>
    <scope>NUCLEOTIDE SEQUENCE [LARGE SCALE GENOMIC DNA]</scope>
    <source>
        <strain>cv. Columbia</strain>
    </source>
</reference>
<reference key="2">
    <citation type="journal article" date="2017" name="Plant J.">
        <title>Araport11: a complete reannotation of the Arabidopsis thaliana reference genome.</title>
        <authorList>
            <person name="Cheng C.Y."/>
            <person name="Krishnakumar V."/>
            <person name="Chan A.P."/>
            <person name="Thibaud-Nissen F."/>
            <person name="Schobel S."/>
            <person name="Town C.D."/>
        </authorList>
    </citation>
    <scope>GENOME REANNOTATION</scope>
    <source>
        <strain>cv. Columbia</strain>
    </source>
</reference>
<reference key="3">
    <citation type="journal article" date="2010" name="J. Mol. Biol.">
        <title>PAH-domain-specific interactions of the Arabidopsis transcription coregulator SIN3-LIKE1 (SNL1) with telomere-binding protein 1 and ALWAYS EARLY2 Myb-DNA binding factors.</title>
        <authorList>
            <person name="Bowen A.J."/>
            <person name="Gonzalez D."/>
            <person name="Mullins J.G."/>
            <person name="Bhatt A.M."/>
            <person name="Martinez A."/>
            <person name="Conlan R.S."/>
        </authorList>
    </citation>
    <scope>GENE FAMILY</scope>
    <scope>NOMENCLATURE</scope>
</reference>
<feature type="chain" id="PRO_0000394043" description="Paired amphipathic helix protein Sin3-like 5">
    <location>
        <begin position="1"/>
        <end position="1162"/>
    </location>
</feature>
<feature type="domain" description="PAH 1" evidence="3">
    <location>
        <begin position="28"/>
        <end position="109"/>
    </location>
</feature>
<feature type="domain" description="PAH 2" evidence="3">
    <location>
        <begin position="123"/>
        <end position="193"/>
    </location>
</feature>
<feature type="region of interest" description="Disordered" evidence="4">
    <location>
        <begin position="1"/>
        <end position="37"/>
    </location>
</feature>
<feature type="region of interest" description="Disordered" evidence="4">
    <location>
        <begin position="702"/>
        <end position="727"/>
    </location>
</feature>
<feature type="region of interest" description="Disordered" evidence="4">
    <location>
        <begin position="743"/>
        <end position="779"/>
    </location>
</feature>
<feature type="region of interest" description="Disordered" evidence="4">
    <location>
        <begin position="803"/>
        <end position="830"/>
    </location>
</feature>
<feature type="region of interest" description="Disordered" evidence="4">
    <location>
        <begin position="1121"/>
        <end position="1143"/>
    </location>
</feature>
<feature type="compositionally biased region" description="Polar residues" evidence="4">
    <location>
        <begin position="18"/>
        <end position="30"/>
    </location>
</feature>
<feature type="compositionally biased region" description="Polar residues" evidence="4">
    <location>
        <begin position="1123"/>
        <end position="1139"/>
    </location>
</feature>
<feature type="modified residue" description="Phosphoserine" evidence="2">
    <location>
        <position position="817"/>
    </location>
</feature>
<sequence>MKRVREEVYVEPQMRGPTVSSRGETNGRPSTISGGGTTGGLTTVDALTYLKAVKDMFQDNKEKYETFLGVMKDFKAQRVDTNGVIARVKDLFKGYDDLLLGFNTFLPKGYKITLQPEDEKPKKPVDFQVAIEFVNRIKARFGGDDRAYKKFLDILNMYRKETKSINEVYQEVTLLFQDHEDLLGEFVHFLPDFRGSVSVNDPLFQRNTIPRDRNSTFPGMHPKHFEKKIKRSRHDEYTELSDQREDGDENLVAYSAESLANQGQWPGYPKVEDTEGIQIYESNGGHERDPDIGSQKNLLSTNHMAKAINELDLTDCAQCTPSYRRLPDDYPIQIPSYRNSLGEKVLNDHWVSVTSGSEDYSFKHMRKNQYEESLFRCEDDRFELDMLLESVSAAIKRVESLLEKINNNTISIETPICIREHLSELNLRCIERLYGDYGLDVMDFLKKNSHIALPVILTRLKQKQEEWARCRADFRKVWAEVYAKNHHKSLDHRSFYFKQQDSKNLSTKGLVAEIKDISERKHKEDLLRAIAVGTKPSFTPDVEFIYTDTKVHTDLYKLIKYYCEEICATEQSDKVMKLWVTFLEPMFGVPSRSETIETMKDVAKIEDNQEHHDASEAVKENTCDGSMASNLKPLTPPKMPNKENPMIQGSSFAQDLPVNTGESIQQDKLHDVAAITNEDSQPSKLVSTRNDLIMEGVENRSRVSDVSMGGHKVEREEGELSPTESCEQENFEVYKENGLEPVQKLPDNEISNTDREPKEGACGTEAVTRSNALPEDDDNKITQKLSEGDENASKFIVSASKFGGQVSSDEEHKGAESENEAGGMVNSNEGEDGSFFTFSERYLQPVKPLAKHVPGTLQASECDTRNDSRVFYGNDSLYVLFRLHQMLYERIQSAKIHSERKWKAPDSTSTDSYTRFMEALYNLLDGSSDNTKFEDECRAIIGAQSYVLFTLDKLVQKFVKHLHAVAADETDTKLLQLYAYENYRKPGRFFDIVYHENARALLHDQNIYRIEYSSAQTRLGIQLMNSWNDQPEVTAVTVEPGFANYLQNDFLSFVSDEEKPGLFLKRNKAKLSGPGEESLGMSRALEGLNIINEVECKIACSSFKVKYEPHTADLLYRRKQKKATLNPTGPENVKTSDSSELSRKKRISRFHMSLNRRLVALP</sequence>
<keyword id="KW-0025">Alternative splicing</keyword>
<keyword id="KW-0539">Nucleus</keyword>
<keyword id="KW-0597">Phosphoprotein</keyword>
<keyword id="KW-1185">Reference proteome</keyword>
<keyword id="KW-0677">Repeat</keyword>
<keyword id="KW-0678">Repressor</keyword>
<keyword id="KW-0804">Transcription</keyword>
<keyword id="KW-0805">Transcription regulation</keyword>